<dbReference type="EMBL" id="CP000238">
    <property type="protein sequence ID" value="ABF14273.1"/>
    <property type="molecule type" value="Genomic_DNA"/>
</dbReference>
<dbReference type="RefSeq" id="WP_011520244.1">
    <property type="nucleotide sequence ID" value="NC_007984.1"/>
</dbReference>
<dbReference type="SMR" id="Q1LU53"/>
<dbReference type="STRING" id="374463.BCI_0032"/>
<dbReference type="KEGG" id="bci:BCI_0032"/>
<dbReference type="HOGENOM" id="CLU_046483_2_1_6"/>
<dbReference type="OrthoDB" id="9803965at2"/>
<dbReference type="Proteomes" id="UP000002427">
    <property type="component" value="Chromosome"/>
</dbReference>
<dbReference type="GO" id="GO:0022627">
    <property type="term" value="C:cytosolic small ribosomal subunit"/>
    <property type="evidence" value="ECO:0007669"/>
    <property type="project" value="TreeGrafter"/>
</dbReference>
<dbReference type="GO" id="GO:0003723">
    <property type="term" value="F:RNA binding"/>
    <property type="evidence" value="ECO:0007669"/>
    <property type="project" value="TreeGrafter"/>
</dbReference>
<dbReference type="GO" id="GO:0003735">
    <property type="term" value="F:structural constituent of ribosome"/>
    <property type="evidence" value="ECO:0007669"/>
    <property type="project" value="InterPro"/>
</dbReference>
<dbReference type="GO" id="GO:0006412">
    <property type="term" value="P:translation"/>
    <property type="evidence" value="ECO:0007669"/>
    <property type="project" value="UniProtKB-UniRule"/>
</dbReference>
<dbReference type="FunFam" id="3.30.230.10:FF:000001">
    <property type="entry name" value="30S ribosomal protein S9"/>
    <property type="match status" value="1"/>
</dbReference>
<dbReference type="Gene3D" id="3.30.230.10">
    <property type="match status" value="1"/>
</dbReference>
<dbReference type="HAMAP" id="MF_00532_B">
    <property type="entry name" value="Ribosomal_uS9_B"/>
    <property type="match status" value="1"/>
</dbReference>
<dbReference type="InterPro" id="IPR020568">
    <property type="entry name" value="Ribosomal_Su5_D2-typ_SF"/>
</dbReference>
<dbReference type="InterPro" id="IPR000754">
    <property type="entry name" value="Ribosomal_uS9"/>
</dbReference>
<dbReference type="InterPro" id="IPR023035">
    <property type="entry name" value="Ribosomal_uS9_bac/plastid"/>
</dbReference>
<dbReference type="InterPro" id="IPR014721">
    <property type="entry name" value="Ribsml_uS5_D2-typ_fold_subgr"/>
</dbReference>
<dbReference type="NCBIfam" id="NF001099">
    <property type="entry name" value="PRK00132.1"/>
    <property type="match status" value="1"/>
</dbReference>
<dbReference type="PANTHER" id="PTHR21569">
    <property type="entry name" value="RIBOSOMAL PROTEIN S9"/>
    <property type="match status" value="1"/>
</dbReference>
<dbReference type="PANTHER" id="PTHR21569:SF1">
    <property type="entry name" value="SMALL RIBOSOMAL SUBUNIT PROTEIN US9M"/>
    <property type="match status" value="1"/>
</dbReference>
<dbReference type="Pfam" id="PF00380">
    <property type="entry name" value="Ribosomal_S9"/>
    <property type="match status" value="1"/>
</dbReference>
<dbReference type="SUPFAM" id="SSF54211">
    <property type="entry name" value="Ribosomal protein S5 domain 2-like"/>
    <property type="match status" value="1"/>
</dbReference>
<evidence type="ECO:0000255" key="1">
    <source>
        <dbReference type="HAMAP-Rule" id="MF_00532"/>
    </source>
</evidence>
<evidence type="ECO:0000305" key="2"/>
<protein>
    <recommendedName>
        <fullName evidence="1">Small ribosomal subunit protein uS9</fullName>
    </recommendedName>
    <alternativeName>
        <fullName evidence="2">30S ribosomal protein S9</fullName>
    </alternativeName>
</protein>
<feature type="chain" id="PRO_1000211826" description="Small ribosomal subunit protein uS9">
    <location>
        <begin position="1"/>
        <end position="132"/>
    </location>
</feature>
<comment type="similarity">
    <text evidence="1">Belongs to the universal ribosomal protein uS9 family.</text>
</comment>
<organism>
    <name type="scientific">Baumannia cicadellinicola subsp. Homalodisca coagulata</name>
    <dbReference type="NCBI Taxonomy" id="374463"/>
    <lineage>
        <taxon>Bacteria</taxon>
        <taxon>Pseudomonadati</taxon>
        <taxon>Pseudomonadota</taxon>
        <taxon>Gammaproteobacteria</taxon>
        <taxon>Candidatus Palibaumannia</taxon>
    </lineage>
</organism>
<gene>
    <name evidence="1" type="primary">rpsI</name>
    <name type="ordered locus">BCI_0032</name>
</gene>
<keyword id="KW-1185">Reference proteome</keyword>
<keyword id="KW-0687">Ribonucleoprotein</keyword>
<keyword id="KW-0689">Ribosomal protein</keyword>
<accession>Q1LU53</accession>
<reference key="1">
    <citation type="journal article" date="2006" name="PLoS Biol.">
        <title>Metabolic complementarity and genomics of the dual bacterial symbiosis of sharpshooters.</title>
        <authorList>
            <person name="Wu D."/>
            <person name="Daugherty S.C."/>
            <person name="Van Aken S.E."/>
            <person name="Pai G.H."/>
            <person name="Watkins K.L."/>
            <person name="Khouri H."/>
            <person name="Tallon L.J."/>
            <person name="Zaborsky J.M."/>
            <person name="Dunbar H.E."/>
            <person name="Tran P.L."/>
            <person name="Moran N.A."/>
            <person name="Eisen J.A."/>
        </authorList>
    </citation>
    <scope>NUCLEOTIDE SEQUENCE [LARGE SCALE GENOMIC DNA]</scope>
</reference>
<name>RS9_BAUCH</name>
<sequence length="132" mass="14950">MVAENQYYGTGRRKSSSARVFMSKNGSGNIIINKRNIDQYFGRETARMVVLQPLELFDMVSKVDVYVTVKGGGISGQAGAIRHGLTCALMKYNELLRVDLRKAGFVTRDARKVERKKVGLHKARRRPQFSKR</sequence>
<proteinExistence type="inferred from homology"/>